<feature type="chain" id="PRO_0000183976" description="Synaptotagmin-13">
    <location>
        <begin position="1"/>
        <end position="426"/>
    </location>
</feature>
<feature type="topological domain" description="Vesicular" evidence="1">
    <location>
        <begin position="1"/>
        <end position="6"/>
    </location>
</feature>
<feature type="transmembrane region" description="Helical" evidence="1">
    <location>
        <begin position="7"/>
        <end position="29"/>
    </location>
</feature>
<feature type="topological domain" description="Cytoplasmic" evidence="1">
    <location>
        <begin position="30"/>
        <end position="426"/>
    </location>
</feature>
<feature type="domain" description="C2 1" evidence="2">
    <location>
        <begin position="158"/>
        <end position="275"/>
    </location>
</feature>
<feature type="domain" description="C2 2" evidence="2">
    <location>
        <begin position="287"/>
        <end position="422"/>
    </location>
</feature>
<feature type="sequence conflict" description="In Ref. 2; BAC31748." evidence="4" ref="2">
    <original>R</original>
    <variation>G</variation>
    <location>
        <position position="52"/>
    </location>
</feature>
<feature type="sequence conflict" description="In Ref. 3; BAC98167." evidence="4" ref="3">
    <original>E</original>
    <variation>G</variation>
    <location>
        <position position="103"/>
    </location>
</feature>
<proteinExistence type="evidence at protein level"/>
<sequence>MVLSVPVIALGATLGTATSILALCGVTCLCRHMHPKKGLLPRDREPDPEKARPGVLQAAQQFNIKKSTEPVQPRPLLKFPDIYGPRPAVTAPEVINYADYTLETTEESAAPASPQAQSDSRLKRQVTEELSIRPQNGVVEDVCVMETWNPEKAASWNQAPKLHFRLDYDQKKAELFVTSLEAVTSDHEGGCDCYIQGSVAVKTGSVEAQTALKKRQLHTTWEEGLALPLGEEELPTATLTLTLRTCDRFSRHSVIGELRLGLDGASVPLGAAQWGELKTTAKEPSAGAGEVLLSISYLPAANRLLVVLIKAKNLHSNQSKELLGKDVSVKVTLKHQAQKLKKKQTKRAKHKINPVWNEMIMFELPDDLLRASSVELEVLGQGEEGPSCELGHCSLGLHASGSERSHWEEMLKNPRRQIAMWHQLHL</sequence>
<protein>
    <recommendedName>
        <fullName>Synaptotagmin-13</fullName>
    </recommendedName>
    <alternativeName>
        <fullName>Synaptotagmin XIII</fullName>
        <shortName>SytXIII</shortName>
    </alternativeName>
</protein>
<organism>
    <name type="scientific">Mus musculus</name>
    <name type="common">Mouse</name>
    <dbReference type="NCBI Taxonomy" id="10090"/>
    <lineage>
        <taxon>Eukaryota</taxon>
        <taxon>Metazoa</taxon>
        <taxon>Chordata</taxon>
        <taxon>Craniata</taxon>
        <taxon>Vertebrata</taxon>
        <taxon>Euteleostomi</taxon>
        <taxon>Mammalia</taxon>
        <taxon>Eutheria</taxon>
        <taxon>Euarchontoglires</taxon>
        <taxon>Glires</taxon>
        <taxon>Rodentia</taxon>
        <taxon>Myomorpha</taxon>
        <taxon>Muroidea</taxon>
        <taxon>Muridae</taxon>
        <taxon>Murinae</taxon>
        <taxon>Mus</taxon>
        <taxon>Mus</taxon>
    </lineage>
</organism>
<comment type="function">
    <text>May be involved in transport vesicle docking to the plasma membrane.</text>
</comment>
<comment type="subunit">
    <text evidence="3">Interacts with NRXN1.</text>
</comment>
<comment type="subcellular location">
    <subcellularLocation>
        <location evidence="3">Cytoplasmic vesicle membrane</location>
        <topology evidence="3">Single-pass membrane protein</topology>
    </subcellularLocation>
</comment>
<comment type="tissue specificity">
    <text evidence="3">Expressed in brain, heart, spleen, lung and testis.</text>
</comment>
<comment type="developmental stage">
    <text evidence="3">Expressed in embryo at 7 dpc onwards.</text>
</comment>
<comment type="domain">
    <text>The first C2 domain/C2A does not mediate Ca(2+)-dependent phospholipid binding.</text>
</comment>
<comment type="domain">
    <text>The second C2 domain/C2B domain binds phospholipids regardless of whether calcium is present.</text>
</comment>
<comment type="similarity">
    <text evidence="4">Belongs to the synaptotagmin family.</text>
</comment>
<comment type="sequence caution" evidence="4">
    <conflict type="erroneous initiation">
        <sequence resource="EMBL-CDS" id="BAC98167"/>
    </conflict>
</comment>
<dbReference type="EMBL" id="AB048947">
    <property type="protein sequence ID" value="BAB19628.1"/>
    <property type="molecule type" value="mRNA"/>
</dbReference>
<dbReference type="EMBL" id="AK044038">
    <property type="protein sequence ID" value="BAC31748.1"/>
    <property type="molecule type" value="mRNA"/>
</dbReference>
<dbReference type="EMBL" id="AK049840">
    <property type="protein sequence ID" value="BAC33948.1"/>
    <property type="molecule type" value="mRNA"/>
</dbReference>
<dbReference type="EMBL" id="AK082425">
    <property type="protein sequence ID" value="BAC38491.1"/>
    <property type="molecule type" value="mRNA"/>
</dbReference>
<dbReference type="EMBL" id="AK129357">
    <property type="protein sequence ID" value="BAC98167.1"/>
    <property type="status" value="ALT_INIT"/>
    <property type="molecule type" value="mRNA"/>
</dbReference>
<dbReference type="EMBL" id="BC030907">
    <property type="protein sequence ID" value="AAH30907.1"/>
    <property type="molecule type" value="mRNA"/>
</dbReference>
<dbReference type="CCDS" id="CCDS16451.1"/>
<dbReference type="RefSeq" id="NP_109650.1">
    <property type="nucleotide sequence ID" value="NM_030725.5"/>
</dbReference>
<dbReference type="SMR" id="Q9EQT6"/>
<dbReference type="FunCoup" id="Q9EQT6">
    <property type="interactions" value="351"/>
</dbReference>
<dbReference type="STRING" id="10090.ENSMUSP00000028648"/>
<dbReference type="iPTMnet" id="Q9EQT6"/>
<dbReference type="PhosphoSitePlus" id="Q9EQT6"/>
<dbReference type="SwissPalm" id="Q9EQT6"/>
<dbReference type="PaxDb" id="10090-ENSMUSP00000028648"/>
<dbReference type="PeptideAtlas" id="Q9EQT6"/>
<dbReference type="ProteomicsDB" id="254617"/>
<dbReference type="Antibodypedia" id="42821">
    <property type="antibodies" value="135 antibodies from 29 providers"/>
</dbReference>
<dbReference type="DNASU" id="80976"/>
<dbReference type="Ensembl" id="ENSMUST00000028648.3">
    <property type="protein sequence ID" value="ENSMUSP00000028648.3"/>
    <property type="gene ID" value="ENSMUSG00000027220.3"/>
</dbReference>
<dbReference type="GeneID" id="80976"/>
<dbReference type="KEGG" id="mmu:80976"/>
<dbReference type="UCSC" id="uc008lfn.1">
    <property type="organism name" value="mouse"/>
</dbReference>
<dbReference type="AGR" id="MGI:1933945"/>
<dbReference type="CTD" id="57586"/>
<dbReference type="MGI" id="MGI:1933945">
    <property type="gene designation" value="Syt13"/>
</dbReference>
<dbReference type="VEuPathDB" id="HostDB:ENSMUSG00000027220"/>
<dbReference type="eggNOG" id="KOG1028">
    <property type="taxonomic scope" value="Eukaryota"/>
</dbReference>
<dbReference type="GeneTree" id="ENSGT00940000160226"/>
<dbReference type="HOGENOM" id="CLU_023008_2_0_1"/>
<dbReference type="InParanoid" id="Q9EQT6"/>
<dbReference type="OMA" id="DEEGQSC"/>
<dbReference type="OrthoDB" id="9997431at2759"/>
<dbReference type="PhylomeDB" id="Q9EQT6"/>
<dbReference type="TreeFam" id="TF315600"/>
<dbReference type="BioGRID-ORCS" id="80976">
    <property type="hits" value="3 hits in 79 CRISPR screens"/>
</dbReference>
<dbReference type="ChiTaRS" id="Syt13">
    <property type="organism name" value="mouse"/>
</dbReference>
<dbReference type="PRO" id="PR:Q9EQT6"/>
<dbReference type="Proteomes" id="UP000000589">
    <property type="component" value="Chromosome 2"/>
</dbReference>
<dbReference type="RNAct" id="Q9EQT6">
    <property type="molecule type" value="protein"/>
</dbReference>
<dbReference type="Bgee" id="ENSMUSG00000027220">
    <property type="expression patterns" value="Expressed in islet of Langerhans and 179 other cell types or tissues"/>
</dbReference>
<dbReference type="GO" id="GO:0030659">
    <property type="term" value="C:cytoplasmic vesicle membrane"/>
    <property type="evidence" value="ECO:0007669"/>
    <property type="project" value="UniProtKB-SubCell"/>
</dbReference>
<dbReference type="GO" id="GO:0005886">
    <property type="term" value="C:plasma membrane"/>
    <property type="evidence" value="ECO:0000314"/>
    <property type="project" value="MGI"/>
</dbReference>
<dbReference type="GO" id="GO:0030133">
    <property type="term" value="C:transport vesicle"/>
    <property type="evidence" value="ECO:0007669"/>
    <property type="project" value="Ensembl"/>
</dbReference>
<dbReference type="GO" id="GO:0016192">
    <property type="term" value="P:vesicle-mediated transport"/>
    <property type="evidence" value="ECO:0000353"/>
    <property type="project" value="MGI"/>
</dbReference>
<dbReference type="CDD" id="cd08407">
    <property type="entry name" value="C2B_Synaptotagmin-13"/>
    <property type="match status" value="1"/>
</dbReference>
<dbReference type="FunFam" id="2.60.40.150:FF:000101">
    <property type="entry name" value="Synaptotagmin 13"/>
    <property type="match status" value="1"/>
</dbReference>
<dbReference type="FunFam" id="2.60.40.150:FF:000145">
    <property type="entry name" value="Synaptotagmin 13"/>
    <property type="match status" value="1"/>
</dbReference>
<dbReference type="Gene3D" id="2.60.40.150">
    <property type="entry name" value="C2 domain"/>
    <property type="match status" value="2"/>
</dbReference>
<dbReference type="InterPro" id="IPR000008">
    <property type="entry name" value="C2_dom"/>
</dbReference>
<dbReference type="InterPro" id="IPR035892">
    <property type="entry name" value="C2_domain_sf"/>
</dbReference>
<dbReference type="InterPro" id="IPR028692">
    <property type="entry name" value="Syt13_C2B"/>
</dbReference>
<dbReference type="PANTHER" id="PTHR10024">
    <property type="entry name" value="SYNAPTOTAGMIN"/>
    <property type="match status" value="1"/>
</dbReference>
<dbReference type="PANTHER" id="PTHR10024:SF250">
    <property type="entry name" value="SYNAPTOTAGMIN-13"/>
    <property type="match status" value="1"/>
</dbReference>
<dbReference type="Pfam" id="PF00168">
    <property type="entry name" value="C2"/>
    <property type="match status" value="2"/>
</dbReference>
<dbReference type="SMART" id="SM00239">
    <property type="entry name" value="C2"/>
    <property type="match status" value="1"/>
</dbReference>
<dbReference type="SUPFAM" id="SSF49562">
    <property type="entry name" value="C2 domain (Calcium/lipid-binding domain, CaLB)"/>
    <property type="match status" value="2"/>
</dbReference>
<dbReference type="PROSITE" id="PS50004">
    <property type="entry name" value="C2"/>
    <property type="match status" value="2"/>
</dbReference>
<accession>Q9EQT6</accession>
<accession>Q6ZPR2</accession>
<accession>Q8BRK6</accession>
<gene>
    <name type="primary">Syt13</name>
    <name type="synonym">Kiaa1427</name>
</gene>
<name>SYT13_MOUSE</name>
<evidence type="ECO:0000255" key="1"/>
<evidence type="ECO:0000255" key="2">
    <source>
        <dbReference type="PROSITE-ProRule" id="PRU00041"/>
    </source>
</evidence>
<evidence type="ECO:0000269" key="3">
    <source>
    </source>
</evidence>
<evidence type="ECO:0000305" key="4"/>
<keyword id="KW-0968">Cytoplasmic vesicle</keyword>
<keyword id="KW-0472">Membrane</keyword>
<keyword id="KW-1185">Reference proteome</keyword>
<keyword id="KW-0677">Repeat</keyword>
<keyword id="KW-0812">Transmembrane</keyword>
<keyword id="KW-1133">Transmembrane helix</keyword>
<reference key="1">
    <citation type="journal article" date="2001" name="Biochem. J.">
        <title>Characterization of KIAA1427 protein as an atypical synaptotagmin (Syt XIII).</title>
        <authorList>
            <person name="Fukuda M."/>
            <person name="Mikoshiba K."/>
        </authorList>
    </citation>
    <scope>NUCLEOTIDE SEQUENCE [MRNA]</scope>
    <scope>INTERACTION WITH NRXN1</scope>
    <scope>SUBCELLULAR LOCATION</scope>
    <scope>DEVELOPMENTAL STAGE</scope>
    <scope>TISSUE SPECIFICITY</scope>
    <source>
        <strain>BALB/cJ</strain>
    </source>
</reference>
<reference key="2">
    <citation type="journal article" date="2005" name="Science">
        <title>The transcriptional landscape of the mammalian genome.</title>
        <authorList>
            <person name="Carninci P."/>
            <person name="Kasukawa T."/>
            <person name="Katayama S."/>
            <person name="Gough J."/>
            <person name="Frith M.C."/>
            <person name="Maeda N."/>
            <person name="Oyama R."/>
            <person name="Ravasi T."/>
            <person name="Lenhard B."/>
            <person name="Wells C."/>
            <person name="Kodzius R."/>
            <person name="Shimokawa K."/>
            <person name="Bajic V.B."/>
            <person name="Brenner S.E."/>
            <person name="Batalov S."/>
            <person name="Forrest A.R."/>
            <person name="Zavolan M."/>
            <person name="Davis M.J."/>
            <person name="Wilming L.G."/>
            <person name="Aidinis V."/>
            <person name="Allen J.E."/>
            <person name="Ambesi-Impiombato A."/>
            <person name="Apweiler R."/>
            <person name="Aturaliya R.N."/>
            <person name="Bailey T.L."/>
            <person name="Bansal M."/>
            <person name="Baxter L."/>
            <person name="Beisel K.W."/>
            <person name="Bersano T."/>
            <person name="Bono H."/>
            <person name="Chalk A.M."/>
            <person name="Chiu K.P."/>
            <person name="Choudhary V."/>
            <person name="Christoffels A."/>
            <person name="Clutterbuck D.R."/>
            <person name="Crowe M.L."/>
            <person name="Dalla E."/>
            <person name="Dalrymple B.P."/>
            <person name="de Bono B."/>
            <person name="Della Gatta G."/>
            <person name="di Bernardo D."/>
            <person name="Down T."/>
            <person name="Engstrom P."/>
            <person name="Fagiolini M."/>
            <person name="Faulkner G."/>
            <person name="Fletcher C.F."/>
            <person name="Fukushima T."/>
            <person name="Furuno M."/>
            <person name="Futaki S."/>
            <person name="Gariboldi M."/>
            <person name="Georgii-Hemming P."/>
            <person name="Gingeras T.R."/>
            <person name="Gojobori T."/>
            <person name="Green R.E."/>
            <person name="Gustincich S."/>
            <person name="Harbers M."/>
            <person name="Hayashi Y."/>
            <person name="Hensch T.K."/>
            <person name="Hirokawa N."/>
            <person name="Hill D."/>
            <person name="Huminiecki L."/>
            <person name="Iacono M."/>
            <person name="Ikeo K."/>
            <person name="Iwama A."/>
            <person name="Ishikawa T."/>
            <person name="Jakt M."/>
            <person name="Kanapin A."/>
            <person name="Katoh M."/>
            <person name="Kawasawa Y."/>
            <person name="Kelso J."/>
            <person name="Kitamura H."/>
            <person name="Kitano H."/>
            <person name="Kollias G."/>
            <person name="Krishnan S.P."/>
            <person name="Kruger A."/>
            <person name="Kummerfeld S.K."/>
            <person name="Kurochkin I.V."/>
            <person name="Lareau L.F."/>
            <person name="Lazarevic D."/>
            <person name="Lipovich L."/>
            <person name="Liu J."/>
            <person name="Liuni S."/>
            <person name="McWilliam S."/>
            <person name="Madan Babu M."/>
            <person name="Madera M."/>
            <person name="Marchionni L."/>
            <person name="Matsuda H."/>
            <person name="Matsuzawa S."/>
            <person name="Miki H."/>
            <person name="Mignone F."/>
            <person name="Miyake S."/>
            <person name="Morris K."/>
            <person name="Mottagui-Tabar S."/>
            <person name="Mulder N."/>
            <person name="Nakano N."/>
            <person name="Nakauchi H."/>
            <person name="Ng P."/>
            <person name="Nilsson R."/>
            <person name="Nishiguchi S."/>
            <person name="Nishikawa S."/>
            <person name="Nori F."/>
            <person name="Ohara O."/>
            <person name="Okazaki Y."/>
            <person name="Orlando V."/>
            <person name="Pang K.C."/>
            <person name="Pavan W.J."/>
            <person name="Pavesi G."/>
            <person name="Pesole G."/>
            <person name="Petrovsky N."/>
            <person name="Piazza S."/>
            <person name="Reed J."/>
            <person name="Reid J.F."/>
            <person name="Ring B.Z."/>
            <person name="Ringwald M."/>
            <person name="Rost B."/>
            <person name="Ruan Y."/>
            <person name="Salzberg S.L."/>
            <person name="Sandelin A."/>
            <person name="Schneider C."/>
            <person name="Schoenbach C."/>
            <person name="Sekiguchi K."/>
            <person name="Semple C.A."/>
            <person name="Seno S."/>
            <person name="Sessa L."/>
            <person name="Sheng Y."/>
            <person name="Shibata Y."/>
            <person name="Shimada H."/>
            <person name="Shimada K."/>
            <person name="Silva D."/>
            <person name="Sinclair B."/>
            <person name="Sperling S."/>
            <person name="Stupka E."/>
            <person name="Sugiura K."/>
            <person name="Sultana R."/>
            <person name="Takenaka Y."/>
            <person name="Taki K."/>
            <person name="Tammoja K."/>
            <person name="Tan S.L."/>
            <person name="Tang S."/>
            <person name="Taylor M.S."/>
            <person name="Tegner J."/>
            <person name="Teichmann S.A."/>
            <person name="Ueda H.R."/>
            <person name="van Nimwegen E."/>
            <person name="Verardo R."/>
            <person name="Wei C.L."/>
            <person name="Yagi K."/>
            <person name="Yamanishi H."/>
            <person name="Zabarovsky E."/>
            <person name="Zhu S."/>
            <person name="Zimmer A."/>
            <person name="Hide W."/>
            <person name="Bult C."/>
            <person name="Grimmond S.M."/>
            <person name="Teasdale R.D."/>
            <person name="Liu E.T."/>
            <person name="Brusic V."/>
            <person name="Quackenbush J."/>
            <person name="Wahlestedt C."/>
            <person name="Mattick J.S."/>
            <person name="Hume D.A."/>
            <person name="Kai C."/>
            <person name="Sasaki D."/>
            <person name="Tomaru Y."/>
            <person name="Fukuda S."/>
            <person name="Kanamori-Katayama M."/>
            <person name="Suzuki M."/>
            <person name="Aoki J."/>
            <person name="Arakawa T."/>
            <person name="Iida J."/>
            <person name="Imamura K."/>
            <person name="Itoh M."/>
            <person name="Kato T."/>
            <person name="Kawaji H."/>
            <person name="Kawagashira N."/>
            <person name="Kawashima T."/>
            <person name="Kojima M."/>
            <person name="Kondo S."/>
            <person name="Konno H."/>
            <person name="Nakano K."/>
            <person name="Ninomiya N."/>
            <person name="Nishio T."/>
            <person name="Okada M."/>
            <person name="Plessy C."/>
            <person name="Shibata K."/>
            <person name="Shiraki T."/>
            <person name="Suzuki S."/>
            <person name="Tagami M."/>
            <person name="Waki K."/>
            <person name="Watahiki A."/>
            <person name="Okamura-Oho Y."/>
            <person name="Suzuki H."/>
            <person name="Kawai J."/>
            <person name="Hayashizaki Y."/>
        </authorList>
    </citation>
    <scope>NUCLEOTIDE SEQUENCE [LARGE SCALE MRNA]</scope>
    <source>
        <strain>C57BL/6J</strain>
        <tissue>Brain cortex</tissue>
        <tissue>Cerebellum</tissue>
        <tissue>Hippocampus</tissue>
    </source>
</reference>
<reference key="3">
    <citation type="journal article" date="2003" name="DNA Res.">
        <title>Prediction of the coding sequences of mouse homologues of KIAA gene: III. The complete nucleotide sequences of 500 mouse KIAA-homologous cDNAs identified by screening of terminal sequences of cDNA clones randomly sampled from size-fractionated libraries.</title>
        <authorList>
            <person name="Okazaki N."/>
            <person name="Kikuno R."/>
            <person name="Ohara R."/>
            <person name="Inamoto S."/>
            <person name="Koseki H."/>
            <person name="Hiraoka S."/>
            <person name="Saga Y."/>
            <person name="Nagase T."/>
            <person name="Ohara O."/>
            <person name="Koga H."/>
        </authorList>
    </citation>
    <scope>NUCLEOTIDE SEQUENCE [LARGE SCALE MRNA]</scope>
    <source>
        <tissue>Brain</tissue>
    </source>
</reference>
<reference key="4">
    <citation type="journal article" date="2004" name="Genome Res.">
        <title>The status, quality, and expansion of the NIH full-length cDNA project: the Mammalian Gene Collection (MGC).</title>
        <authorList>
            <consortium name="The MGC Project Team"/>
        </authorList>
    </citation>
    <scope>NUCLEOTIDE SEQUENCE [LARGE SCALE MRNA]</scope>
    <source>
        <strain>C57BL/6J</strain>
        <tissue>Eye</tissue>
    </source>
</reference>